<organism>
    <name type="scientific">Leifsonia xyli subsp. xyli (strain CTCB07)</name>
    <dbReference type="NCBI Taxonomy" id="281090"/>
    <lineage>
        <taxon>Bacteria</taxon>
        <taxon>Bacillati</taxon>
        <taxon>Actinomycetota</taxon>
        <taxon>Actinomycetes</taxon>
        <taxon>Micrococcales</taxon>
        <taxon>Microbacteriaceae</taxon>
        <taxon>Leifsonia</taxon>
    </lineage>
</organism>
<feature type="chain" id="PRO_0000119416" description="GTP cyclohydrolase 1">
    <location>
        <begin position="1"/>
        <end position="191"/>
    </location>
</feature>
<feature type="binding site" evidence="2">
    <location>
        <position position="80"/>
    </location>
    <ligand>
        <name>Zn(2+)</name>
        <dbReference type="ChEBI" id="CHEBI:29105"/>
    </ligand>
</feature>
<feature type="binding site" evidence="2">
    <location>
        <position position="83"/>
    </location>
    <ligand>
        <name>Zn(2+)</name>
        <dbReference type="ChEBI" id="CHEBI:29105"/>
    </ligand>
</feature>
<feature type="binding site" evidence="2">
    <location>
        <position position="151"/>
    </location>
    <ligand>
        <name>Zn(2+)</name>
        <dbReference type="ChEBI" id="CHEBI:29105"/>
    </ligand>
</feature>
<sequence>MTGFDRARIEAAVAEILAAVGEDPSRPGLSATPSRVADAYAEFFAGLGRDAEAELGEPVPLEQGQAETVILREISFRSVCEHHLLPFIGVAHVAYLPGEAVIGLGRIPRVIDTLAARPQVQERLTEQIADTFEAGAGARGVLVVLSAEHGCVTARGPRQVAATTVTLAARGEFAEPAARAELIALIGCGAA</sequence>
<comment type="catalytic activity">
    <reaction evidence="2">
        <text>GTP + H2O = 7,8-dihydroneopterin 3'-triphosphate + formate + H(+)</text>
        <dbReference type="Rhea" id="RHEA:17473"/>
        <dbReference type="ChEBI" id="CHEBI:15377"/>
        <dbReference type="ChEBI" id="CHEBI:15378"/>
        <dbReference type="ChEBI" id="CHEBI:15740"/>
        <dbReference type="ChEBI" id="CHEBI:37565"/>
        <dbReference type="ChEBI" id="CHEBI:58462"/>
        <dbReference type="EC" id="3.5.4.16"/>
    </reaction>
</comment>
<comment type="pathway">
    <text evidence="2">Cofactor biosynthesis; 7,8-dihydroneopterin triphosphate biosynthesis; 7,8-dihydroneopterin triphosphate from GTP: step 1/1.</text>
</comment>
<comment type="subunit">
    <text evidence="1">Toroid-shaped homodecamer, composed of two pentamers of five dimers.</text>
</comment>
<comment type="similarity">
    <text evidence="2">Belongs to the GTP cyclohydrolase I family.</text>
</comment>
<name>GCH1_LEIXX</name>
<protein>
    <recommendedName>
        <fullName evidence="2">GTP cyclohydrolase 1</fullName>
        <ecNumber evidence="2">3.5.4.16</ecNumber>
    </recommendedName>
    <alternativeName>
        <fullName evidence="2">GTP cyclohydrolase I</fullName>
        <shortName evidence="2">GTP-CH-I</shortName>
    </alternativeName>
</protein>
<dbReference type="EC" id="3.5.4.16" evidence="2"/>
<dbReference type="EMBL" id="AE016822">
    <property type="protein sequence ID" value="AAT89842.1"/>
    <property type="molecule type" value="Genomic_DNA"/>
</dbReference>
<dbReference type="RefSeq" id="WP_011186826.1">
    <property type="nucleotide sequence ID" value="NC_006087.1"/>
</dbReference>
<dbReference type="SMR" id="Q6ACQ1"/>
<dbReference type="STRING" id="281090.Lxx21490"/>
<dbReference type="KEGG" id="lxx:Lxx21490"/>
<dbReference type="eggNOG" id="COG0302">
    <property type="taxonomic scope" value="Bacteria"/>
</dbReference>
<dbReference type="HOGENOM" id="CLU_049768_3_3_11"/>
<dbReference type="UniPathway" id="UPA00848">
    <property type="reaction ID" value="UER00151"/>
</dbReference>
<dbReference type="Proteomes" id="UP000001306">
    <property type="component" value="Chromosome"/>
</dbReference>
<dbReference type="GO" id="GO:0005737">
    <property type="term" value="C:cytoplasm"/>
    <property type="evidence" value="ECO:0007669"/>
    <property type="project" value="TreeGrafter"/>
</dbReference>
<dbReference type="GO" id="GO:0005525">
    <property type="term" value="F:GTP binding"/>
    <property type="evidence" value="ECO:0007669"/>
    <property type="project" value="UniProtKB-KW"/>
</dbReference>
<dbReference type="GO" id="GO:0003934">
    <property type="term" value="F:GTP cyclohydrolase I activity"/>
    <property type="evidence" value="ECO:0007669"/>
    <property type="project" value="UniProtKB-UniRule"/>
</dbReference>
<dbReference type="GO" id="GO:0008270">
    <property type="term" value="F:zinc ion binding"/>
    <property type="evidence" value="ECO:0007669"/>
    <property type="project" value="UniProtKB-UniRule"/>
</dbReference>
<dbReference type="GO" id="GO:0006730">
    <property type="term" value="P:one-carbon metabolic process"/>
    <property type="evidence" value="ECO:0007669"/>
    <property type="project" value="UniProtKB-UniRule"/>
</dbReference>
<dbReference type="GO" id="GO:0006729">
    <property type="term" value="P:tetrahydrobiopterin biosynthetic process"/>
    <property type="evidence" value="ECO:0007669"/>
    <property type="project" value="TreeGrafter"/>
</dbReference>
<dbReference type="GO" id="GO:0046654">
    <property type="term" value="P:tetrahydrofolate biosynthetic process"/>
    <property type="evidence" value="ECO:0007669"/>
    <property type="project" value="UniProtKB-UniRule"/>
</dbReference>
<dbReference type="FunFam" id="1.10.286.10:FF:000001">
    <property type="entry name" value="GTP cyclohydrolase 1"/>
    <property type="match status" value="1"/>
</dbReference>
<dbReference type="FunFam" id="3.30.1130.10:FF:000001">
    <property type="entry name" value="GTP cyclohydrolase 1"/>
    <property type="match status" value="1"/>
</dbReference>
<dbReference type="Gene3D" id="1.10.286.10">
    <property type="match status" value="1"/>
</dbReference>
<dbReference type="Gene3D" id="3.30.1130.10">
    <property type="match status" value="1"/>
</dbReference>
<dbReference type="HAMAP" id="MF_00223">
    <property type="entry name" value="FolE"/>
    <property type="match status" value="1"/>
</dbReference>
<dbReference type="InterPro" id="IPR043133">
    <property type="entry name" value="GTP-CH-I_C/QueF"/>
</dbReference>
<dbReference type="InterPro" id="IPR043134">
    <property type="entry name" value="GTP-CH-I_N"/>
</dbReference>
<dbReference type="InterPro" id="IPR001474">
    <property type="entry name" value="GTP_CycHdrlase_I"/>
</dbReference>
<dbReference type="InterPro" id="IPR018234">
    <property type="entry name" value="GTP_CycHdrlase_I_CS"/>
</dbReference>
<dbReference type="InterPro" id="IPR020602">
    <property type="entry name" value="GTP_CycHdrlase_I_dom"/>
</dbReference>
<dbReference type="NCBIfam" id="NF006825">
    <property type="entry name" value="PRK09347.1-2"/>
    <property type="match status" value="1"/>
</dbReference>
<dbReference type="NCBIfam" id="NF006826">
    <property type="entry name" value="PRK09347.1-3"/>
    <property type="match status" value="1"/>
</dbReference>
<dbReference type="PANTHER" id="PTHR11109:SF7">
    <property type="entry name" value="GTP CYCLOHYDROLASE 1"/>
    <property type="match status" value="1"/>
</dbReference>
<dbReference type="PANTHER" id="PTHR11109">
    <property type="entry name" value="GTP CYCLOHYDROLASE I"/>
    <property type="match status" value="1"/>
</dbReference>
<dbReference type="Pfam" id="PF01227">
    <property type="entry name" value="GTP_cyclohydroI"/>
    <property type="match status" value="1"/>
</dbReference>
<dbReference type="SUPFAM" id="SSF55620">
    <property type="entry name" value="Tetrahydrobiopterin biosynthesis enzymes-like"/>
    <property type="match status" value="1"/>
</dbReference>
<dbReference type="PROSITE" id="PS00859">
    <property type="entry name" value="GTP_CYCLOHYDROL_1_1"/>
    <property type="match status" value="1"/>
</dbReference>
<dbReference type="PROSITE" id="PS00860">
    <property type="entry name" value="GTP_CYCLOHYDROL_1_2"/>
    <property type="match status" value="1"/>
</dbReference>
<keyword id="KW-0342">GTP-binding</keyword>
<keyword id="KW-0378">Hydrolase</keyword>
<keyword id="KW-0479">Metal-binding</keyword>
<keyword id="KW-0547">Nucleotide-binding</keyword>
<keyword id="KW-0554">One-carbon metabolism</keyword>
<keyword id="KW-1185">Reference proteome</keyword>
<keyword id="KW-0862">Zinc</keyword>
<accession>Q6ACQ1</accession>
<reference key="1">
    <citation type="journal article" date="2004" name="Mol. Plant Microbe Interact.">
        <title>The genome sequence of the Gram-positive sugarcane pathogen Leifsonia xyli subsp. xyli.</title>
        <authorList>
            <person name="Monteiro-Vitorello C.B."/>
            <person name="Camargo L.E.A."/>
            <person name="Van Sluys M.A."/>
            <person name="Kitajima J.P."/>
            <person name="Truffi D."/>
            <person name="do Amaral A.M."/>
            <person name="Harakava R."/>
            <person name="de Oliveira J.C.F."/>
            <person name="Wood D."/>
            <person name="de Oliveira M.C."/>
            <person name="Miyaki C.Y."/>
            <person name="Takita M.A."/>
            <person name="da Silva A.C.R."/>
            <person name="Furlan L.R."/>
            <person name="Carraro D.M."/>
            <person name="Camarotte G."/>
            <person name="Almeida N.F. Jr."/>
            <person name="Carrer H."/>
            <person name="Coutinho L.L."/>
            <person name="El-Dorry H.A."/>
            <person name="Ferro M.I.T."/>
            <person name="Gagliardi P.R."/>
            <person name="Giglioti E."/>
            <person name="Goldman M.H.S."/>
            <person name="Goldman G.H."/>
            <person name="Kimura E.T."/>
            <person name="Ferro E.S."/>
            <person name="Kuramae E.E."/>
            <person name="Lemos E.G.M."/>
            <person name="Lemos M.V.F."/>
            <person name="Mauro S.M.Z."/>
            <person name="Machado M.A."/>
            <person name="Marino C.L."/>
            <person name="Menck C.F."/>
            <person name="Nunes L.R."/>
            <person name="Oliveira R.C."/>
            <person name="Pereira G.G."/>
            <person name="Siqueira W."/>
            <person name="de Souza A.A."/>
            <person name="Tsai S.M."/>
            <person name="Zanca A.S."/>
            <person name="Simpson A.J.G."/>
            <person name="Brumbley S.M."/>
            <person name="Setubal J.C."/>
        </authorList>
    </citation>
    <scope>NUCLEOTIDE SEQUENCE [LARGE SCALE GENOMIC DNA]</scope>
    <source>
        <strain>CTCB07</strain>
    </source>
</reference>
<evidence type="ECO:0000250" key="1"/>
<evidence type="ECO:0000255" key="2">
    <source>
        <dbReference type="HAMAP-Rule" id="MF_00223"/>
    </source>
</evidence>
<gene>
    <name evidence="2" type="primary">folE</name>
    <name type="ordered locus">Lxx21490</name>
</gene>
<proteinExistence type="inferred from homology"/>